<feature type="chain" id="PRO_0000370742" description="Leucine-rich repeat-containing protein 51">
    <location>
        <begin position="1"/>
        <end position="192"/>
    </location>
</feature>
<feature type="repeat" description="LRR 1">
    <location>
        <begin position="49"/>
        <end position="71"/>
    </location>
</feature>
<feature type="repeat" description="LRR 2">
    <location>
        <begin position="80"/>
        <end position="101"/>
    </location>
</feature>
<feature type="repeat" description="LRR 3">
    <location>
        <begin position="103"/>
        <end position="124"/>
    </location>
</feature>
<feature type="domain" description="LRRCT">
    <location>
        <begin position="137"/>
        <end position="175"/>
    </location>
</feature>
<feature type="splice variant" id="VSP_053061" description="In isoform 2." evidence="4">
    <original>LT</original>
    <variation>SS</variation>
    <location>
        <begin position="98"/>
        <end position="99"/>
    </location>
</feature>
<feature type="splice variant" id="VSP_053062" description="In isoform 2." evidence="4">
    <location>
        <begin position="100"/>
        <end position="192"/>
    </location>
</feature>
<feature type="splice variant" id="VSP_053063" description="In isoform 4." evidence="4">
    <original>RQYVLCTLSRITTFDFAGVTKADRTTAEVWKRMNIKPKKAWIKRNTL</original>
    <variation>SRPWTPPPVLCSGPPAQGPGRDHVPCHCIGLPATGGNIAGAVPALLPIAGAHGLAAKPPRLPVRAADRGAGLQLCAHPCPAR</variation>
    <location>
        <begin position="146"/>
        <end position="192"/>
    </location>
</feature>
<feature type="splice variant" id="VSP_053064" description="In isoform 5." evidence="4">
    <original>RQYVLCTLSRITTFDFAGVTKADRTTAEVWKRMNIKPKKAWIKRNTL</original>
    <variation>SRPWTPPPVLCSGPPAQPPRLPVRAADRGAGLQLCAHPCPAR</variation>
    <location>
        <begin position="146"/>
        <end position="192"/>
    </location>
</feature>
<feature type="splice variant" id="VSP_053065" description="In isoform 3." evidence="4">
    <location>
        <begin position="147"/>
        <end position="192"/>
    </location>
</feature>
<feature type="sequence conflict" description="In Ref. 1; ACF40883." evidence="5" ref="1">
    <original>V</original>
    <variation>I</variation>
    <location>
        <position position="25"/>
    </location>
</feature>
<feature type="sequence conflict" description="In Ref. 1; ACF40883." evidence="5" ref="1">
    <original>R</original>
    <variation>H</variation>
    <location>
        <position position="116"/>
    </location>
</feature>
<dbReference type="EMBL" id="EU627071">
    <property type="protein sequence ID" value="ACF40881.1"/>
    <property type="molecule type" value="mRNA"/>
</dbReference>
<dbReference type="EMBL" id="EU627072">
    <property type="protein sequence ID" value="ACF40882.1"/>
    <property type="molecule type" value="mRNA"/>
</dbReference>
<dbReference type="EMBL" id="EU627073">
    <property type="protein sequence ID" value="ACF40883.1"/>
    <property type="molecule type" value="mRNA"/>
</dbReference>
<dbReference type="EMBL" id="EU627074">
    <property type="protein sequence ID" value="ACF40884.1"/>
    <property type="molecule type" value="mRNA"/>
</dbReference>
<dbReference type="EMBL" id="EU627075">
    <property type="protein sequence ID" value="ACF40885.1"/>
    <property type="molecule type" value="mRNA"/>
</dbReference>
<dbReference type="RefSeq" id="NP_001138337.1">
    <molecule id="B6CZ40-1"/>
    <property type="nucleotide sequence ID" value="NM_001144865.1"/>
</dbReference>
<dbReference type="SMR" id="B6CZ40"/>
<dbReference type="FunCoup" id="B6CZ40">
    <property type="interactions" value="224"/>
</dbReference>
<dbReference type="GeneID" id="748243"/>
<dbReference type="KEGG" id="ptr:748243"/>
<dbReference type="CTD" id="220074"/>
<dbReference type="InParanoid" id="B6CZ40"/>
<dbReference type="Proteomes" id="UP000002277">
    <property type="component" value="Unplaced"/>
</dbReference>
<dbReference type="GO" id="GO:0005930">
    <property type="term" value="C:axoneme"/>
    <property type="evidence" value="ECO:0000318"/>
    <property type="project" value="GO_Central"/>
</dbReference>
<dbReference type="Gene3D" id="3.80.10.10">
    <property type="entry name" value="Ribonuclease Inhibitor"/>
    <property type="match status" value="1"/>
</dbReference>
<dbReference type="InterPro" id="IPR001611">
    <property type="entry name" value="Leu-rich_rpt"/>
</dbReference>
<dbReference type="InterPro" id="IPR032675">
    <property type="entry name" value="LRR_dom_sf"/>
</dbReference>
<dbReference type="PANTHER" id="PTHR46545">
    <property type="entry name" value="LEUCINE-RICH REPEAT-CONTAINING PROTEIN 51"/>
    <property type="match status" value="1"/>
</dbReference>
<dbReference type="PANTHER" id="PTHR46545:SF1">
    <property type="entry name" value="LEUCINE-RICH REPEAT-CONTAINING PROTEIN 51"/>
    <property type="match status" value="1"/>
</dbReference>
<dbReference type="Pfam" id="PF14580">
    <property type="entry name" value="LRR_9"/>
    <property type="match status" value="1"/>
</dbReference>
<dbReference type="SUPFAM" id="SSF52075">
    <property type="entry name" value="Outer arm dynein light chain 1"/>
    <property type="match status" value="1"/>
</dbReference>
<dbReference type="PROSITE" id="PS51450">
    <property type="entry name" value="LRR"/>
    <property type="match status" value="4"/>
</dbReference>
<evidence type="ECO:0000250" key="1">
    <source>
        <dbReference type="UniProtKB" id="Q96E66"/>
    </source>
</evidence>
<evidence type="ECO:0000250" key="2">
    <source>
        <dbReference type="UniProtKB" id="Q9DAK8"/>
    </source>
</evidence>
<evidence type="ECO:0000269" key="3">
    <source>
    </source>
</evidence>
<evidence type="ECO:0000303" key="4">
    <source>
    </source>
</evidence>
<evidence type="ECO:0000305" key="5"/>
<evidence type="ECO:0000312" key="6">
    <source>
        <dbReference type="EMBL" id="ACF40881.1"/>
    </source>
</evidence>
<organism>
    <name type="scientific">Pan troglodytes</name>
    <name type="common">Chimpanzee</name>
    <dbReference type="NCBI Taxonomy" id="9598"/>
    <lineage>
        <taxon>Eukaryota</taxon>
        <taxon>Metazoa</taxon>
        <taxon>Chordata</taxon>
        <taxon>Craniata</taxon>
        <taxon>Vertebrata</taxon>
        <taxon>Euteleostomi</taxon>
        <taxon>Mammalia</taxon>
        <taxon>Eutheria</taxon>
        <taxon>Euarchontoglires</taxon>
        <taxon>Primates</taxon>
        <taxon>Haplorrhini</taxon>
        <taxon>Catarrhini</taxon>
        <taxon>Hominidae</taxon>
        <taxon>Pan</taxon>
    </lineage>
</organism>
<proteinExistence type="evidence at transcript level"/>
<gene>
    <name evidence="1" type="primary">LRRC51</name>
    <name evidence="4" type="synonym">LRTOMT</name>
</gene>
<name>LRC51_PANTR</name>
<keyword id="KW-0025">Alternative splicing</keyword>
<keyword id="KW-0963">Cytoplasm</keyword>
<keyword id="KW-0433">Leucine-rich repeat</keyword>
<keyword id="KW-1185">Reference proteome</keyword>
<keyword id="KW-0677">Repeat</keyword>
<reference evidence="5 6" key="1">
    <citation type="journal article" date="2008" name="Nat. Genet.">
        <title>Mutations of LRTOMT, a fusion gene with alternative reading frames, cause nonsyndromic deafness in humans.</title>
        <authorList>
            <person name="Ahmed Z.M."/>
            <person name="Masmoudi S."/>
            <person name="Kalay E."/>
            <person name="Belyantseva I.A."/>
            <person name="Mosrati M.A."/>
            <person name="Collin R.W.J."/>
            <person name="Riazuddin S."/>
            <person name="Hmani-Aifa M."/>
            <person name="Venselaar H."/>
            <person name="Kawar M.N."/>
            <person name="Tlili A."/>
            <person name="van der Zwaag B."/>
            <person name="Khan S.Y."/>
            <person name="Ayadi L."/>
            <person name="Riazuddin S.A."/>
            <person name="Morell R.J."/>
            <person name="Griffith A.J."/>
            <person name="Charfedine I."/>
            <person name="Caylan R."/>
            <person name="Oostrik J."/>
            <person name="Karaguzel A."/>
            <person name="Ghorbel A."/>
            <person name="Riazuddin S."/>
            <person name="Friedman T.B."/>
            <person name="Ayadi H."/>
            <person name="Kremer H."/>
        </authorList>
    </citation>
    <scope>NUCLEOTIDE SEQUENCE [MRNA] (ISOFORMS 1; 2; 3; 4 AND 5)</scope>
    <source>
        <tissue evidence="6">Brain</tissue>
    </source>
</reference>
<accession>B6CZ40</accession>
<accession>B6CZ41</accession>
<accession>B6CZ42</accession>
<accession>B6CZ43</accession>
<accession>B6CZ44</accession>
<comment type="subcellular location">
    <subcellularLocation>
        <location evidence="2">Cytoplasm</location>
    </subcellularLocation>
</comment>
<comment type="alternative products">
    <event type="alternative splicing"/>
    <isoform>
        <id>B6CZ40-1</id>
        <name evidence="3">1</name>
        <name evidence="3">A</name>
        <sequence type="displayed"/>
    </isoform>
    <isoform>
        <id>B6CZ40-2</id>
        <name evidence="3">2</name>
        <name evidence="3">B</name>
        <sequence type="described" ref="VSP_053061 VSP_053062"/>
    </isoform>
    <isoform>
        <id>B6CZ40-3</id>
        <name evidence="3">3</name>
        <name evidence="3">C</name>
        <sequence type="described" ref="VSP_053065"/>
    </isoform>
    <isoform>
        <id>B6CZ40-4</id>
        <name evidence="3">4</name>
        <name evidence="3">D</name>
        <sequence type="described" ref="VSP_053063"/>
    </isoform>
    <isoform>
        <id>B6CZ40-5</id>
        <name evidence="3">5</name>
        <name evidence="3">E</name>
        <sequence type="described" ref="VSP_053064"/>
    </isoform>
</comment>
<comment type="miscellaneous">
    <text evidence="4">LRRC51 and TOMT were originally considered as alternative reading frames, LRTOMT1 and LRTOMT2 of the same LRTOMT gene in primates.</text>
</comment>
<protein>
    <recommendedName>
        <fullName evidence="1">Leucine-rich repeat-containing protein 51</fullName>
    </recommendedName>
    <alternativeName>
        <fullName evidence="4">Protein LRTOMT1</fullName>
    </alternativeName>
</protein>
<sequence>MNKRDYMNTSVQEPPLDYSFRSIHVIQDLVNEEPRTGLRPLKRSKSGKSLTQSLWLNNNVLNDLRDFNQVASQLLEHPENLAWIDLSFNDLTSIDPVLTTFFNLSVLYLHGNSIQRLGEVNKLAVLPRLRSLTLHGNPMEEEKGYRQYVLCTLSRITTFDFAGVTKADRTTAEVWKRMNIKPKKAWIKRNTL</sequence>